<keyword id="KW-0067">ATP-binding</keyword>
<keyword id="KW-0227">DNA damage</keyword>
<keyword id="KW-0234">DNA repair</keyword>
<keyword id="KW-0238">DNA-binding</keyword>
<keyword id="KW-0547">Nucleotide-binding</keyword>
<keyword id="KW-0539">Nucleus</keyword>
<keyword id="KW-1185">Reference proteome</keyword>
<evidence type="ECO:0000250" key="1"/>
<evidence type="ECO:0000255" key="2"/>
<evidence type="ECO:0000269" key="3">
    <source>
    </source>
</evidence>
<evidence type="ECO:0000269" key="4">
    <source>
    </source>
</evidence>
<evidence type="ECO:0000269" key="5">
    <source>
    </source>
</evidence>
<evidence type="ECO:0000305" key="6"/>
<gene>
    <name type="primary">msh3</name>
    <name type="synonym">swi4</name>
    <name type="ORF">SPAC8F11.03</name>
</gene>
<reference key="1">
    <citation type="journal article" date="1992" name="Nucleic Acids Res.">
        <title>The swi4+ gene of Schizosaccharomyces pombe encodes a homologue of mismatch repair enzymes.</title>
        <authorList>
            <person name="Fleck O."/>
            <person name="Michael H."/>
            <person name="Heim L."/>
        </authorList>
    </citation>
    <scope>NUCLEOTIDE SEQUENCE [GENOMIC DNA]</scope>
    <source>
        <strain>972 / ATCC 24843</strain>
    </source>
</reference>
<reference key="2">
    <citation type="journal article" date="2002" name="Nature">
        <title>The genome sequence of Schizosaccharomyces pombe.</title>
        <authorList>
            <person name="Wood V."/>
            <person name="Gwilliam R."/>
            <person name="Rajandream M.A."/>
            <person name="Lyne M.H."/>
            <person name="Lyne R."/>
            <person name="Stewart A."/>
            <person name="Sgouros J.G."/>
            <person name="Peat N."/>
            <person name="Hayles J."/>
            <person name="Baker S.G."/>
            <person name="Basham D."/>
            <person name="Bowman S."/>
            <person name="Brooks K."/>
            <person name="Brown D."/>
            <person name="Brown S."/>
            <person name="Chillingworth T."/>
            <person name="Churcher C.M."/>
            <person name="Collins M."/>
            <person name="Connor R."/>
            <person name="Cronin A."/>
            <person name="Davis P."/>
            <person name="Feltwell T."/>
            <person name="Fraser A."/>
            <person name="Gentles S."/>
            <person name="Goble A."/>
            <person name="Hamlin N."/>
            <person name="Harris D.E."/>
            <person name="Hidalgo J."/>
            <person name="Hodgson G."/>
            <person name="Holroyd S."/>
            <person name="Hornsby T."/>
            <person name="Howarth S."/>
            <person name="Huckle E.J."/>
            <person name="Hunt S."/>
            <person name="Jagels K."/>
            <person name="James K.D."/>
            <person name="Jones L."/>
            <person name="Jones M."/>
            <person name="Leather S."/>
            <person name="McDonald S."/>
            <person name="McLean J."/>
            <person name="Mooney P."/>
            <person name="Moule S."/>
            <person name="Mungall K.L."/>
            <person name="Murphy L.D."/>
            <person name="Niblett D."/>
            <person name="Odell C."/>
            <person name="Oliver K."/>
            <person name="O'Neil S."/>
            <person name="Pearson D."/>
            <person name="Quail M.A."/>
            <person name="Rabbinowitsch E."/>
            <person name="Rutherford K.M."/>
            <person name="Rutter S."/>
            <person name="Saunders D."/>
            <person name="Seeger K."/>
            <person name="Sharp S."/>
            <person name="Skelton J."/>
            <person name="Simmonds M.N."/>
            <person name="Squares R."/>
            <person name="Squares S."/>
            <person name="Stevens K."/>
            <person name="Taylor K."/>
            <person name="Taylor R.G."/>
            <person name="Tivey A."/>
            <person name="Walsh S.V."/>
            <person name="Warren T."/>
            <person name="Whitehead S."/>
            <person name="Woodward J.R."/>
            <person name="Volckaert G."/>
            <person name="Aert R."/>
            <person name="Robben J."/>
            <person name="Grymonprez B."/>
            <person name="Weltjens I."/>
            <person name="Vanstreels E."/>
            <person name="Rieger M."/>
            <person name="Schaefer M."/>
            <person name="Mueller-Auer S."/>
            <person name="Gabel C."/>
            <person name="Fuchs M."/>
            <person name="Duesterhoeft A."/>
            <person name="Fritzc C."/>
            <person name="Holzer E."/>
            <person name="Moestl D."/>
            <person name="Hilbert H."/>
            <person name="Borzym K."/>
            <person name="Langer I."/>
            <person name="Beck A."/>
            <person name="Lehrach H."/>
            <person name="Reinhardt R."/>
            <person name="Pohl T.M."/>
            <person name="Eger P."/>
            <person name="Zimmermann W."/>
            <person name="Wedler H."/>
            <person name="Wambutt R."/>
            <person name="Purnelle B."/>
            <person name="Goffeau A."/>
            <person name="Cadieu E."/>
            <person name="Dreano S."/>
            <person name="Gloux S."/>
            <person name="Lelaure V."/>
            <person name="Mottier S."/>
            <person name="Galibert F."/>
            <person name="Aves S.J."/>
            <person name="Xiang Z."/>
            <person name="Hunt C."/>
            <person name="Moore K."/>
            <person name="Hurst S.M."/>
            <person name="Lucas M."/>
            <person name="Rochet M."/>
            <person name="Gaillardin C."/>
            <person name="Tallada V.A."/>
            <person name="Garzon A."/>
            <person name="Thode G."/>
            <person name="Daga R.R."/>
            <person name="Cruzado L."/>
            <person name="Jimenez J."/>
            <person name="Sanchez M."/>
            <person name="del Rey F."/>
            <person name="Benito J."/>
            <person name="Dominguez A."/>
            <person name="Revuelta J.L."/>
            <person name="Moreno S."/>
            <person name="Armstrong J."/>
            <person name="Forsburg S.L."/>
            <person name="Cerutti L."/>
            <person name="Lowe T."/>
            <person name="McCombie W.R."/>
            <person name="Paulsen I."/>
            <person name="Potashkin J."/>
            <person name="Shpakovski G.V."/>
            <person name="Ussery D."/>
            <person name="Barrell B.G."/>
            <person name="Nurse P."/>
        </authorList>
    </citation>
    <scope>NUCLEOTIDE SEQUENCE [LARGE SCALE GENOMIC DNA]</scope>
    <source>
        <strain>972 / ATCC 24843</strain>
    </source>
</reference>
<reference key="3">
    <citation type="journal article" date="2001" name="Genetics">
        <title>Requirement for Msh6, but not for Swi4 (Msh3), in Msh2-dependent repair of base-base mismatches and mononucleotide loops in Schizosaccharomyces pombe.</title>
        <authorList>
            <person name="Tornier C."/>
            <person name="Bessone S."/>
            <person name="Varlet I."/>
            <person name="Rudolph C."/>
            <person name="Darmon M."/>
            <person name="Fleck O."/>
        </authorList>
    </citation>
    <scope>FUNCTION</scope>
</reference>
<reference key="4">
    <citation type="journal article" date="2001" name="Genetics">
        <title>Control of GT repeat stability in Schizosaccharomyces pombe by mismatch repair factors.</title>
        <authorList>
            <person name="Mansour A.A."/>
            <person name="Tornier C."/>
            <person name="Lehmann E."/>
            <person name="Darmon M."/>
            <person name="Fleck O."/>
        </authorList>
    </citation>
    <scope>FUNCTION</scope>
</reference>
<reference key="5">
    <citation type="journal article" date="2006" name="Nat. Biotechnol.">
        <title>ORFeome cloning and global analysis of protein localization in the fission yeast Schizosaccharomyces pombe.</title>
        <authorList>
            <person name="Matsuyama A."/>
            <person name="Arai R."/>
            <person name="Yashiroda Y."/>
            <person name="Shirai A."/>
            <person name="Kamata A."/>
            <person name="Sekido S."/>
            <person name="Kobayashi Y."/>
            <person name="Hashimoto A."/>
            <person name="Hamamoto M."/>
            <person name="Hiraoka Y."/>
            <person name="Horinouchi S."/>
            <person name="Yoshida M."/>
        </authorList>
    </citation>
    <scope>SUBCELLULAR LOCATION [LARGE SCALE ANALYSIS]</scope>
</reference>
<feature type="chain" id="PRO_0000115196" description="DNA mismatch repair protein msh3">
    <location>
        <begin position="1"/>
        <end position="993"/>
    </location>
</feature>
<feature type="region of interest" description="Mispair-binding domain" evidence="1">
    <location>
        <begin position="97"/>
        <end position="211"/>
    </location>
</feature>
<feature type="binding site" evidence="2">
    <location>
        <begin position="759"/>
        <end position="766"/>
    </location>
    <ligand>
        <name>ATP</name>
        <dbReference type="ChEBI" id="CHEBI:30616"/>
    </ligand>
</feature>
<feature type="sequence conflict" description="In Ref. 2; CAB52164." evidence="6" ref="2">
    <original>R</original>
    <variation>RCTPSEMFHVLK</variation>
    <location>
        <position position="499"/>
    </location>
</feature>
<protein>
    <recommendedName>
        <fullName>DNA mismatch repair protein msh3</fullName>
    </recommendedName>
    <alternativeName>
        <fullName>Mating-type switching protein swi4</fullName>
    </alternativeName>
    <alternativeName>
        <fullName>MutS protein homolog 3</fullName>
    </alternativeName>
</protein>
<dbReference type="EMBL" id="X61306">
    <property type="protein sequence ID" value="CAA43603.1"/>
    <property type="molecule type" value="Genomic_DNA"/>
</dbReference>
<dbReference type="EMBL" id="CU329670">
    <property type="protein sequence ID" value="CAB52164.2"/>
    <property type="molecule type" value="Genomic_DNA"/>
</dbReference>
<dbReference type="PIR" id="S22569">
    <property type="entry name" value="S21964"/>
</dbReference>
<dbReference type="RefSeq" id="NP_593952.1">
    <property type="nucleotide sequence ID" value="NM_001019379.2"/>
</dbReference>
<dbReference type="SMR" id="P26359"/>
<dbReference type="FunCoup" id="P26359">
    <property type="interactions" value="743"/>
</dbReference>
<dbReference type="STRING" id="284812.P26359"/>
<dbReference type="iPTMnet" id="P26359"/>
<dbReference type="PaxDb" id="4896-SPAC8F11.03.1"/>
<dbReference type="GeneID" id="2543392"/>
<dbReference type="KEGG" id="spo:2543392"/>
<dbReference type="PomBase" id="SPAC8F11.03">
    <property type="gene designation" value="msh3"/>
</dbReference>
<dbReference type="eggNOG" id="KOG0218">
    <property type="taxonomic scope" value="Eukaryota"/>
</dbReference>
<dbReference type="HOGENOM" id="CLU_002472_0_1_1"/>
<dbReference type="InParanoid" id="P26359"/>
<dbReference type="PhylomeDB" id="P26359"/>
<dbReference type="Reactome" id="R-SPO-5358606">
    <property type="pathway name" value="Mismatch repair (MMR) directed by MSH2:MSH3 (MutSbeta)"/>
</dbReference>
<dbReference type="PRO" id="PR:P26359"/>
<dbReference type="Proteomes" id="UP000002485">
    <property type="component" value="Chromosome I"/>
</dbReference>
<dbReference type="GO" id="GO:0000228">
    <property type="term" value="C:nuclear chromosome"/>
    <property type="evidence" value="ECO:0000266"/>
    <property type="project" value="PomBase"/>
</dbReference>
<dbReference type="GO" id="GO:0005634">
    <property type="term" value="C:nucleus"/>
    <property type="evidence" value="ECO:0007005"/>
    <property type="project" value="PomBase"/>
</dbReference>
<dbReference type="GO" id="GO:0035861">
    <property type="term" value="C:site of double-strand break"/>
    <property type="evidence" value="ECO:0000314"/>
    <property type="project" value="PomBase"/>
</dbReference>
<dbReference type="GO" id="GO:0005524">
    <property type="term" value="F:ATP binding"/>
    <property type="evidence" value="ECO:0000255"/>
    <property type="project" value="PomBase"/>
</dbReference>
<dbReference type="GO" id="GO:0016887">
    <property type="term" value="F:ATP hydrolysis activity"/>
    <property type="evidence" value="ECO:0000305"/>
    <property type="project" value="PomBase"/>
</dbReference>
<dbReference type="GO" id="GO:0140664">
    <property type="term" value="F:ATP-dependent DNA damage sensor activity"/>
    <property type="evidence" value="ECO:0007669"/>
    <property type="project" value="InterPro"/>
</dbReference>
<dbReference type="GO" id="GO:0000406">
    <property type="term" value="F:double-strand/single-strand DNA junction binding"/>
    <property type="evidence" value="ECO:0000266"/>
    <property type="project" value="PomBase"/>
</dbReference>
<dbReference type="GO" id="GO:0003690">
    <property type="term" value="F:double-stranded DNA binding"/>
    <property type="evidence" value="ECO:0000318"/>
    <property type="project" value="GO_Central"/>
</dbReference>
<dbReference type="GO" id="GO:0030983">
    <property type="term" value="F:mismatched DNA binding"/>
    <property type="evidence" value="ECO:0007669"/>
    <property type="project" value="InterPro"/>
</dbReference>
<dbReference type="GO" id="GO:0007534">
    <property type="term" value="P:gene conversion at mating-type locus"/>
    <property type="evidence" value="ECO:0000315"/>
    <property type="project" value="PomBase"/>
</dbReference>
<dbReference type="GO" id="GO:0043570">
    <property type="term" value="P:maintenance of DNA repeat elements"/>
    <property type="evidence" value="ECO:0000315"/>
    <property type="project" value="PomBase"/>
</dbReference>
<dbReference type="GO" id="GO:0006298">
    <property type="term" value="P:mismatch repair"/>
    <property type="evidence" value="ECO:0000318"/>
    <property type="project" value="GO_Central"/>
</dbReference>
<dbReference type="GO" id="GO:0006312">
    <property type="term" value="P:mitotic recombination"/>
    <property type="evidence" value="ECO:0000318"/>
    <property type="project" value="GO_Central"/>
</dbReference>
<dbReference type="GO" id="GO:0007131">
    <property type="term" value="P:reciprocal meiotic recombination"/>
    <property type="evidence" value="ECO:0000315"/>
    <property type="project" value="PomBase"/>
</dbReference>
<dbReference type="CDD" id="cd03287">
    <property type="entry name" value="ABC_MSH3_euk"/>
    <property type="match status" value="1"/>
</dbReference>
<dbReference type="FunFam" id="3.30.420.110:FF:000010">
    <property type="entry name" value="DNA mismatch repair protein"/>
    <property type="match status" value="1"/>
</dbReference>
<dbReference type="FunFam" id="3.40.1170.10:FF:000004">
    <property type="entry name" value="DNA mismatch repair protein"/>
    <property type="match status" value="1"/>
</dbReference>
<dbReference type="FunFam" id="1.10.1420.10:FF:000004">
    <property type="entry name" value="DNA mismatch repair protein Msh3"/>
    <property type="match status" value="1"/>
</dbReference>
<dbReference type="FunFam" id="3.40.50.300:FF:000870">
    <property type="entry name" value="MutS protein homolog 4"/>
    <property type="match status" value="1"/>
</dbReference>
<dbReference type="Gene3D" id="1.10.1420.10">
    <property type="match status" value="2"/>
</dbReference>
<dbReference type="Gene3D" id="3.40.1170.10">
    <property type="entry name" value="DNA repair protein MutS, domain I"/>
    <property type="match status" value="1"/>
</dbReference>
<dbReference type="Gene3D" id="3.30.420.110">
    <property type="entry name" value="MutS, connector domain"/>
    <property type="match status" value="1"/>
</dbReference>
<dbReference type="Gene3D" id="3.40.50.300">
    <property type="entry name" value="P-loop containing nucleotide triphosphate hydrolases"/>
    <property type="match status" value="1"/>
</dbReference>
<dbReference type="InterPro" id="IPR007695">
    <property type="entry name" value="DNA_mismatch_repair_MutS-lik_N"/>
</dbReference>
<dbReference type="InterPro" id="IPR017261">
    <property type="entry name" value="DNA_mismatch_repair_MutS/MSH"/>
</dbReference>
<dbReference type="InterPro" id="IPR000432">
    <property type="entry name" value="DNA_mismatch_repair_MutS_C"/>
</dbReference>
<dbReference type="InterPro" id="IPR007861">
    <property type="entry name" value="DNA_mismatch_repair_MutS_clamp"/>
</dbReference>
<dbReference type="InterPro" id="IPR007696">
    <property type="entry name" value="DNA_mismatch_repair_MutS_core"/>
</dbReference>
<dbReference type="InterPro" id="IPR016151">
    <property type="entry name" value="DNA_mismatch_repair_MutS_N"/>
</dbReference>
<dbReference type="InterPro" id="IPR036187">
    <property type="entry name" value="DNA_mismatch_repair_MutS_sf"/>
</dbReference>
<dbReference type="InterPro" id="IPR007860">
    <property type="entry name" value="DNA_mmatch_repair_MutS_con_dom"/>
</dbReference>
<dbReference type="InterPro" id="IPR045076">
    <property type="entry name" value="MutS"/>
</dbReference>
<dbReference type="InterPro" id="IPR036678">
    <property type="entry name" value="MutS_con_dom_sf"/>
</dbReference>
<dbReference type="InterPro" id="IPR027417">
    <property type="entry name" value="P-loop_NTPase"/>
</dbReference>
<dbReference type="NCBIfam" id="NF003810">
    <property type="entry name" value="PRK05399.1"/>
    <property type="match status" value="1"/>
</dbReference>
<dbReference type="PANTHER" id="PTHR11361:SF122">
    <property type="entry name" value="DNA MISMATCH REPAIR PROTEIN MSH3"/>
    <property type="match status" value="1"/>
</dbReference>
<dbReference type="PANTHER" id="PTHR11361">
    <property type="entry name" value="DNA MISMATCH REPAIR PROTEIN MUTS FAMILY MEMBER"/>
    <property type="match status" value="1"/>
</dbReference>
<dbReference type="Pfam" id="PF01624">
    <property type="entry name" value="MutS_I"/>
    <property type="match status" value="1"/>
</dbReference>
<dbReference type="Pfam" id="PF05188">
    <property type="entry name" value="MutS_II"/>
    <property type="match status" value="1"/>
</dbReference>
<dbReference type="Pfam" id="PF05192">
    <property type="entry name" value="MutS_III"/>
    <property type="match status" value="1"/>
</dbReference>
<dbReference type="Pfam" id="PF05190">
    <property type="entry name" value="MutS_IV"/>
    <property type="match status" value="1"/>
</dbReference>
<dbReference type="Pfam" id="PF00488">
    <property type="entry name" value="MutS_V"/>
    <property type="match status" value="1"/>
</dbReference>
<dbReference type="PIRSF" id="PIRSF037677">
    <property type="entry name" value="DNA_mis_repair_Msh6"/>
    <property type="match status" value="1"/>
</dbReference>
<dbReference type="SMART" id="SM00534">
    <property type="entry name" value="MUTSac"/>
    <property type="match status" value="1"/>
</dbReference>
<dbReference type="SMART" id="SM00533">
    <property type="entry name" value="MUTSd"/>
    <property type="match status" value="1"/>
</dbReference>
<dbReference type="SUPFAM" id="SSF55271">
    <property type="entry name" value="DNA repair protein MutS, domain I"/>
    <property type="match status" value="1"/>
</dbReference>
<dbReference type="SUPFAM" id="SSF48334">
    <property type="entry name" value="DNA repair protein MutS, domain III"/>
    <property type="match status" value="1"/>
</dbReference>
<dbReference type="SUPFAM" id="SSF52540">
    <property type="entry name" value="P-loop containing nucleoside triphosphate hydrolases"/>
    <property type="match status" value="1"/>
</dbReference>
<dbReference type="PROSITE" id="PS00486">
    <property type="entry name" value="DNA_MISMATCH_REPAIR_2"/>
    <property type="match status" value="1"/>
</dbReference>
<sequence length="993" mass="113362">MRGMSYNITHECDAINILSDNLHEGAISEDMVALSGPAIELLENNVGSSKNSYQEDEGSSSIDENAPLISIKRKRRIRTVKSTSNKELVQRKASKPTKQKSVFTPLEQQYLELKKNYQETILAIEVGYKFRFFGKDAKIASEVLGISCYFEHNFLNASVPSYRIDYHLERLINFGLKVAVVRQTETAALKSTSSSRNTLFDRRVARVLTKGTTLDDSFFRFEQTQHGTLQASQFILCVADNVDKSKAKSGRVQVGLIAIQLSSGTTVYDHFQDDFLRSELQTRLSHFQPCELIYSNKLSSESVALLNHYVSTEKTCGRVVRVQHAVQQDVKLALENLQDFFSSKCIMSGSKIIELHMEKVKSLHSLSIICLDMAISYLMEFSLEDLFVASNFYQPFDSISSMVLSKQALEGLELFVNQTDHTPVGSLFWVLDRTYTRFGQRMLQRWLQKPLVDKENIIERLDAVEELAFNSNSQVQAIRKMLYRLPDLEKGLSRIYYQRGFYKAASAFSKNSYSCFKSALLRRLIQQLPSISSIIDHFLGMFDQKEAENNNKVDMFKDIDNFDLSEEPNDVDYELAQEIRELKMSILMVRTEMDFHLQELRDYLEYPNLEFSIWGNVKFCIEVSKGCKKIPPDWIKLSSTRSLFRFHTPKIQSLLIELSSHEENLTISSEKIYRSFLSRISEHYNELRNVTTVLGTLDCLISFARISSQSGYTRPEFSDKELLIHESRHPMIELLSDKSFVPNHIHLSSDGVRCLLITGPNMGGKSSFVKQLALSAIMAQSGCFVPAKSALLPIFDSILIRMGSSDNLSVNMSTFMVEMLETKEVLSKATEKSMVIIDELGRGTSTIDGEAISYAVLHYLNQYIKSYLLFVTHFPSLGILERRFEGQLRCFHMGYLKSKEDFETSVSQSISFLYKLVPGVASKSYGLNVARMAGIPFSILSRATEISENYEKKHRNARKNVFIRKVAKLLMILNAEEIDFKRLFYDLTAFEEI</sequence>
<proteinExistence type="inferred from homology"/>
<name>MSH3_SCHPO</name>
<organism>
    <name type="scientific">Schizosaccharomyces pombe (strain 972 / ATCC 24843)</name>
    <name type="common">Fission yeast</name>
    <dbReference type="NCBI Taxonomy" id="284812"/>
    <lineage>
        <taxon>Eukaryota</taxon>
        <taxon>Fungi</taxon>
        <taxon>Dikarya</taxon>
        <taxon>Ascomycota</taxon>
        <taxon>Taphrinomycotina</taxon>
        <taxon>Schizosaccharomycetes</taxon>
        <taxon>Schizosaccharomycetales</taxon>
        <taxon>Schizosaccharomycetaceae</taxon>
        <taxon>Schizosaccharomyces</taxon>
    </lineage>
</organism>
<accession>P26359</accession>
<comment type="function">
    <text evidence="1 3 4">Component of the post-replicative DNA mismatch repair system (MMR). Heterodimerizes with msh2 to form MutS beta, which binds to DNA mismatches thereby initiating DNA repair. Msh3 provides substrate-binding and substrate specificity to the complex. When bound, the MutS beta heterodimer bends the DNA helix and shields approximately 20 base pairs. Acts mainly to repair insertion-deletion loops (IDLs) from 2 to 13 nucleotides in size, but can also repair base-base and single insertion-deletion mismatches that occur during replication. After mismatch binding, forms a ternary complex with the MutL alpha heterodimer, which is thought to be responsible for directing the downstream MMR events, including strand discrimination, excision, and resynthesis. ATP binding and hydrolysis play a pivotal role in mismatch repair functions (By similarity). Involved in termination of copy-synthesis during mating-type switching.</text>
</comment>
<comment type="subunit">
    <text evidence="1">Heterodimer consisting of msh2-msh3 (MutS beta). Forms a ternary complex with MutL alpha (mlh1-pms1) (By similarity).</text>
</comment>
<comment type="subcellular location">
    <subcellularLocation>
        <location evidence="5">Nucleus</location>
    </subcellularLocation>
</comment>
<comment type="similarity">
    <text evidence="6">Belongs to the DNA mismatch repair MutS family. MSH3 subfamily.</text>
</comment>